<organism>
    <name type="scientific">Thermotoga sp. (strain RQ2)</name>
    <dbReference type="NCBI Taxonomy" id="126740"/>
    <lineage>
        <taxon>Bacteria</taxon>
        <taxon>Thermotogati</taxon>
        <taxon>Thermotogota</taxon>
        <taxon>Thermotogae</taxon>
        <taxon>Thermotogales</taxon>
        <taxon>Thermotogaceae</taxon>
        <taxon>Thermotoga</taxon>
    </lineage>
</organism>
<reference key="1">
    <citation type="journal article" date="2011" name="J. Bacteriol.">
        <title>Genome sequence of Thermotoga sp. strain RQ2, a hyperthermophilic bacterium isolated from a geothermally heated region of the seafloor near Ribeira Quente, the Azores.</title>
        <authorList>
            <person name="Swithers K.S."/>
            <person name="DiPippo J.L."/>
            <person name="Bruce D.C."/>
            <person name="Detter C."/>
            <person name="Tapia R."/>
            <person name="Han S."/>
            <person name="Saunders E."/>
            <person name="Goodwin L.A."/>
            <person name="Han J."/>
            <person name="Woyke T."/>
            <person name="Pitluck S."/>
            <person name="Pennacchio L."/>
            <person name="Nolan M."/>
            <person name="Mikhailova N."/>
            <person name="Lykidis A."/>
            <person name="Land M.L."/>
            <person name="Brettin T."/>
            <person name="Stetter K.O."/>
            <person name="Nelson K.E."/>
            <person name="Gogarten J.P."/>
            <person name="Noll K.M."/>
        </authorList>
    </citation>
    <scope>NUCLEOTIDE SEQUENCE [LARGE SCALE GENOMIC DNA]</scope>
    <source>
        <strain>RQ2</strain>
    </source>
</reference>
<protein>
    <recommendedName>
        <fullName evidence="1">Protein RecA</fullName>
    </recommendedName>
    <alternativeName>
        <fullName evidence="1">Recombinase A</fullName>
    </alternativeName>
</protein>
<comment type="function">
    <text evidence="1">Can catalyze the hydrolysis of ATP in the presence of single-stranded DNA, the ATP-dependent uptake of single-stranded DNA by duplex DNA, and the ATP-dependent hybridization of homologous single-stranded DNAs. It interacts with LexA causing its activation and leading to its autocatalytic cleavage.</text>
</comment>
<comment type="subcellular location">
    <subcellularLocation>
        <location evidence="1">Cytoplasm</location>
    </subcellularLocation>
</comment>
<comment type="similarity">
    <text evidence="1">Belongs to the RecA family.</text>
</comment>
<feature type="chain" id="PRO_1000114377" description="Protein RecA">
    <location>
        <begin position="1"/>
        <end position="356"/>
    </location>
</feature>
<feature type="binding site" evidence="1">
    <location>
        <begin position="68"/>
        <end position="75"/>
    </location>
    <ligand>
        <name>ATP</name>
        <dbReference type="ChEBI" id="CHEBI:30616"/>
    </ligand>
</feature>
<sequence>MPEEKQKKSVLEKALKRIEENFGKGSIMILGDETQVQPVEVIPTGSLAIDIATGVGGYPRGRIVEIFGQESSGKTTLALHAIAEAQKMGGVAAFIDAEHALDPVYAKNLGVDLKSLLISQPDHGEQALEIVDELVRSGVVDLIVVDSVAALVPRAEIEGAMGDMQVGLQARLMSQALRKIAGSVNKSKAVVIFTNQIRMKIGVMFGSPETTTGGLALKFYATMRMEVRRGEPIKEGKDVIGNVINVKIVKNKVAPPFKTAQTYIIYGKGIDREYELFNIAVNEGIVDRKGSWYYYTTLKGEEVSLGQGSSNAVQFLKDNPEIAGEIERRIREKYGLLSVEKEEQRKEKKSSGEEAS</sequence>
<gene>
    <name evidence="1" type="primary">recA</name>
    <name type="ordered locus">TRQ2_0960</name>
</gene>
<evidence type="ECO:0000255" key="1">
    <source>
        <dbReference type="HAMAP-Rule" id="MF_00268"/>
    </source>
</evidence>
<dbReference type="EMBL" id="CP000969">
    <property type="protein sequence ID" value="ACB09311.1"/>
    <property type="molecule type" value="Genomic_DNA"/>
</dbReference>
<dbReference type="RefSeq" id="WP_012310844.1">
    <property type="nucleotide sequence ID" value="NC_010483.1"/>
</dbReference>
<dbReference type="SMR" id="B1LAG3"/>
<dbReference type="KEGG" id="trq:TRQ2_0960"/>
<dbReference type="HOGENOM" id="CLU_040469_3_2_0"/>
<dbReference type="Proteomes" id="UP000001687">
    <property type="component" value="Chromosome"/>
</dbReference>
<dbReference type="GO" id="GO:0005829">
    <property type="term" value="C:cytosol"/>
    <property type="evidence" value="ECO:0007669"/>
    <property type="project" value="TreeGrafter"/>
</dbReference>
<dbReference type="GO" id="GO:0005524">
    <property type="term" value="F:ATP binding"/>
    <property type="evidence" value="ECO:0007669"/>
    <property type="project" value="UniProtKB-UniRule"/>
</dbReference>
<dbReference type="GO" id="GO:0016887">
    <property type="term" value="F:ATP hydrolysis activity"/>
    <property type="evidence" value="ECO:0007669"/>
    <property type="project" value="InterPro"/>
</dbReference>
<dbReference type="GO" id="GO:0140664">
    <property type="term" value="F:ATP-dependent DNA damage sensor activity"/>
    <property type="evidence" value="ECO:0007669"/>
    <property type="project" value="InterPro"/>
</dbReference>
<dbReference type="GO" id="GO:0003684">
    <property type="term" value="F:damaged DNA binding"/>
    <property type="evidence" value="ECO:0007669"/>
    <property type="project" value="UniProtKB-UniRule"/>
</dbReference>
<dbReference type="GO" id="GO:0003697">
    <property type="term" value="F:single-stranded DNA binding"/>
    <property type="evidence" value="ECO:0007669"/>
    <property type="project" value="UniProtKB-UniRule"/>
</dbReference>
<dbReference type="GO" id="GO:0006310">
    <property type="term" value="P:DNA recombination"/>
    <property type="evidence" value="ECO:0007669"/>
    <property type="project" value="UniProtKB-UniRule"/>
</dbReference>
<dbReference type="GO" id="GO:0006281">
    <property type="term" value="P:DNA repair"/>
    <property type="evidence" value="ECO:0007669"/>
    <property type="project" value="UniProtKB-UniRule"/>
</dbReference>
<dbReference type="GO" id="GO:0009432">
    <property type="term" value="P:SOS response"/>
    <property type="evidence" value="ECO:0007669"/>
    <property type="project" value="UniProtKB-UniRule"/>
</dbReference>
<dbReference type="CDD" id="cd00983">
    <property type="entry name" value="RecA"/>
    <property type="match status" value="1"/>
</dbReference>
<dbReference type="FunFam" id="3.40.50.300:FF:000087">
    <property type="entry name" value="Recombinase RecA"/>
    <property type="match status" value="1"/>
</dbReference>
<dbReference type="Gene3D" id="3.40.50.300">
    <property type="entry name" value="P-loop containing nucleotide triphosphate hydrolases"/>
    <property type="match status" value="1"/>
</dbReference>
<dbReference type="HAMAP" id="MF_00268">
    <property type="entry name" value="RecA"/>
    <property type="match status" value="1"/>
</dbReference>
<dbReference type="InterPro" id="IPR003593">
    <property type="entry name" value="AAA+_ATPase"/>
</dbReference>
<dbReference type="InterPro" id="IPR013765">
    <property type="entry name" value="DNA_recomb/repair_RecA"/>
</dbReference>
<dbReference type="InterPro" id="IPR020584">
    <property type="entry name" value="DNA_recomb/repair_RecA_CS"/>
</dbReference>
<dbReference type="InterPro" id="IPR027417">
    <property type="entry name" value="P-loop_NTPase"/>
</dbReference>
<dbReference type="InterPro" id="IPR049261">
    <property type="entry name" value="RecA-like_C"/>
</dbReference>
<dbReference type="InterPro" id="IPR049428">
    <property type="entry name" value="RecA-like_N"/>
</dbReference>
<dbReference type="InterPro" id="IPR020588">
    <property type="entry name" value="RecA_ATP-bd"/>
</dbReference>
<dbReference type="InterPro" id="IPR023400">
    <property type="entry name" value="RecA_C_sf"/>
</dbReference>
<dbReference type="InterPro" id="IPR020587">
    <property type="entry name" value="RecA_monomer-monomer_interface"/>
</dbReference>
<dbReference type="NCBIfam" id="TIGR02012">
    <property type="entry name" value="tigrfam_recA"/>
    <property type="match status" value="1"/>
</dbReference>
<dbReference type="PANTHER" id="PTHR45900:SF1">
    <property type="entry name" value="MITOCHONDRIAL DNA REPAIR PROTEIN RECA HOMOLOG-RELATED"/>
    <property type="match status" value="1"/>
</dbReference>
<dbReference type="PANTHER" id="PTHR45900">
    <property type="entry name" value="RECA"/>
    <property type="match status" value="1"/>
</dbReference>
<dbReference type="Pfam" id="PF00154">
    <property type="entry name" value="RecA"/>
    <property type="match status" value="1"/>
</dbReference>
<dbReference type="Pfam" id="PF21096">
    <property type="entry name" value="RecA_C"/>
    <property type="match status" value="1"/>
</dbReference>
<dbReference type="PRINTS" id="PR00142">
    <property type="entry name" value="RECA"/>
</dbReference>
<dbReference type="SMART" id="SM00382">
    <property type="entry name" value="AAA"/>
    <property type="match status" value="1"/>
</dbReference>
<dbReference type="SUPFAM" id="SSF52540">
    <property type="entry name" value="P-loop containing nucleoside triphosphate hydrolases"/>
    <property type="match status" value="1"/>
</dbReference>
<dbReference type="SUPFAM" id="SSF54752">
    <property type="entry name" value="RecA protein, C-terminal domain"/>
    <property type="match status" value="1"/>
</dbReference>
<dbReference type="PROSITE" id="PS00321">
    <property type="entry name" value="RECA_1"/>
    <property type="match status" value="1"/>
</dbReference>
<dbReference type="PROSITE" id="PS50162">
    <property type="entry name" value="RECA_2"/>
    <property type="match status" value="1"/>
</dbReference>
<dbReference type="PROSITE" id="PS50163">
    <property type="entry name" value="RECA_3"/>
    <property type="match status" value="1"/>
</dbReference>
<accession>B1LAG3</accession>
<name>RECA_THESQ</name>
<keyword id="KW-0067">ATP-binding</keyword>
<keyword id="KW-0963">Cytoplasm</keyword>
<keyword id="KW-0227">DNA damage</keyword>
<keyword id="KW-0233">DNA recombination</keyword>
<keyword id="KW-0234">DNA repair</keyword>
<keyword id="KW-0238">DNA-binding</keyword>
<keyword id="KW-0547">Nucleotide-binding</keyword>
<keyword id="KW-0742">SOS response</keyword>
<proteinExistence type="inferred from homology"/>